<gene>
    <name evidence="1" type="primary">rimO</name>
    <name type="ordered locus">Strop_1396</name>
</gene>
<evidence type="ECO:0000255" key="1">
    <source>
        <dbReference type="HAMAP-Rule" id="MF_01865"/>
    </source>
</evidence>
<evidence type="ECO:0000255" key="2">
    <source>
        <dbReference type="PROSITE-ProRule" id="PRU01266"/>
    </source>
</evidence>
<protein>
    <recommendedName>
        <fullName evidence="1">Ribosomal protein uS12 methylthiotransferase RimO</fullName>
        <shortName evidence="1">uS12 MTTase</shortName>
        <shortName evidence="1">uS12 methylthiotransferase</shortName>
        <ecNumber evidence="1">2.8.4.4</ecNumber>
    </recommendedName>
    <alternativeName>
        <fullName evidence="1">Ribosomal protein uS12 (aspartate-C(3))-methylthiotransferase</fullName>
    </alternativeName>
    <alternativeName>
        <fullName evidence="1">Ribosome maturation factor RimO</fullName>
    </alternativeName>
</protein>
<feature type="chain" id="PRO_0000374984" description="Ribosomal protein uS12 methylthiotransferase RimO">
    <location>
        <begin position="1"/>
        <end position="507"/>
    </location>
</feature>
<feature type="domain" description="MTTase N-terminal" evidence="1">
    <location>
        <begin position="13"/>
        <end position="124"/>
    </location>
</feature>
<feature type="domain" description="Radical SAM core" evidence="2">
    <location>
        <begin position="191"/>
        <end position="422"/>
    </location>
</feature>
<feature type="domain" description="TRAM" evidence="1">
    <location>
        <begin position="424"/>
        <end position="497"/>
    </location>
</feature>
<feature type="binding site" evidence="1">
    <location>
        <position position="22"/>
    </location>
    <ligand>
        <name>[4Fe-4S] cluster</name>
        <dbReference type="ChEBI" id="CHEBI:49883"/>
        <label>1</label>
    </ligand>
</feature>
<feature type="binding site" evidence="1">
    <location>
        <position position="58"/>
    </location>
    <ligand>
        <name>[4Fe-4S] cluster</name>
        <dbReference type="ChEBI" id="CHEBI:49883"/>
        <label>1</label>
    </ligand>
</feature>
<feature type="binding site" evidence="1">
    <location>
        <position position="87"/>
    </location>
    <ligand>
        <name>[4Fe-4S] cluster</name>
        <dbReference type="ChEBI" id="CHEBI:49883"/>
        <label>1</label>
    </ligand>
</feature>
<feature type="binding site" evidence="1">
    <location>
        <position position="205"/>
    </location>
    <ligand>
        <name>[4Fe-4S] cluster</name>
        <dbReference type="ChEBI" id="CHEBI:49883"/>
        <label>2</label>
        <note>4Fe-4S-S-AdoMet</note>
    </ligand>
</feature>
<feature type="binding site" evidence="1">
    <location>
        <position position="209"/>
    </location>
    <ligand>
        <name>[4Fe-4S] cluster</name>
        <dbReference type="ChEBI" id="CHEBI:49883"/>
        <label>2</label>
        <note>4Fe-4S-S-AdoMet</note>
    </ligand>
</feature>
<feature type="binding site" evidence="1">
    <location>
        <position position="212"/>
    </location>
    <ligand>
        <name>[4Fe-4S] cluster</name>
        <dbReference type="ChEBI" id="CHEBI:49883"/>
        <label>2</label>
        <note>4Fe-4S-S-AdoMet</note>
    </ligand>
</feature>
<name>RIMO_SALTO</name>
<organism>
    <name type="scientific">Salinispora tropica (strain ATCC BAA-916 / DSM 44818 / JCM 13857 / NBRC 105044 / CNB-440)</name>
    <dbReference type="NCBI Taxonomy" id="369723"/>
    <lineage>
        <taxon>Bacteria</taxon>
        <taxon>Bacillati</taxon>
        <taxon>Actinomycetota</taxon>
        <taxon>Actinomycetes</taxon>
        <taxon>Micromonosporales</taxon>
        <taxon>Micromonosporaceae</taxon>
        <taxon>Salinispora</taxon>
    </lineage>
</organism>
<dbReference type="EC" id="2.8.4.4" evidence="1"/>
<dbReference type="EMBL" id="CP000667">
    <property type="protein sequence ID" value="ABP53863.1"/>
    <property type="molecule type" value="Genomic_DNA"/>
</dbReference>
<dbReference type="RefSeq" id="WP_011905295.1">
    <property type="nucleotide sequence ID" value="NC_009380.1"/>
</dbReference>
<dbReference type="SMR" id="A4X4R3"/>
<dbReference type="STRING" id="369723.Strop_1396"/>
<dbReference type="KEGG" id="stp:Strop_1396"/>
<dbReference type="PATRIC" id="fig|369723.5.peg.1423"/>
<dbReference type="eggNOG" id="COG0621">
    <property type="taxonomic scope" value="Bacteria"/>
</dbReference>
<dbReference type="HOGENOM" id="CLU_018697_0_1_11"/>
<dbReference type="Proteomes" id="UP000000235">
    <property type="component" value="Chromosome"/>
</dbReference>
<dbReference type="GO" id="GO:0005829">
    <property type="term" value="C:cytosol"/>
    <property type="evidence" value="ECO:0007669"/>
    <property type="project" value="TreeGrafter"/>
</dbReference>
<dbReference type="GO" id="GO:0051539">
    <property type="term" value="F:4 iron, 4 sulfur cluster binding"/>
    <property type="evidence" value="ECO:0007669"/>
    <property type="project" value="UniProtKB-UniRule"/>
</dbReference>
<dbReference type="GO" id="GO:0035599">
    <property type="term" value="F:aspartic acid methylthiotransferase activity"/>
    <property type="evidence" value="ECO:0007669"/>
    <property type="project" value="TreeGrafter"/>
</dbReference>
<dbReference type="GO" id="GO:0046872">
    <property type="term" value="F:metal ion binding"/>
    <property type="evidence" value="ECO:0007669"/>
    <property type="project" value="UniProtKB-KW"/>
</dbReference>
<dbReference type="GO" id="GO:0103039">
    <property type="term" value="F:protein methylthiotransferase activity"/>
    <property type="evidence" value="ECO:0007669"/>
    <property type="project" value="UniProtKB-EC"/>
</dbReference>
<dbReference type="CDD" id="cd01335">
    <property type="entry name" value="Radical_SAM"/>
    <property type="match status" value="1"/>
</dbReference>
<dbReference type="FunFam" id="3.80.30.20:FF:000001">
    <property type="entry name" value="tRNA-2-methylthio-N(6)-dimethylallyladenosine synthase 2"/>
    <property type="match status" value="1"/>
</dbReference>
<dbReference type="Gene3D" id="3.40.50.12160">
    <property type="entry name" value="Methylthiotransferase, N-terminal domain"/>
    <property type="match status" value="1"/>
</dbReference>
<dbReference type="Gene3D" id="2.40.50.140">
    <property type="entry name" value="Nucleic acid-binding proteins"/>
    <property type="match status" value="1"/>
</dbReference>
<dbReference type="Gene3D" id="3.80.30.20">
    <property type="entry name" value="tm_1862 like domain"/>
    <property type="match status" value="1"/>
</dbReference>
<dbReference type="HAMAP" id="MF_01865">
    <property type="entry name" value="MTTase_RimO"/>
    <property type="match status" value="1"/>
</dbReference>
<dbReference type="InterPro" id="IPR006638">
    <property type="entry name" value="Elp3/MiaA/NifB-like_rSAM"/>
</dbReference>
<dbReference type="InterPro" id="IPR020612">
    <property type="entry name" value="Methylthiotransferase_CS"/>
</dbReference>
<dbReference type="InterPro" id="IPR013848">
    <property type="entry name" value="Methylthiotransferase_N"/>
</dbReference>
<dbReference type="InterPro" id="IPR038135">
    <property type="entry name" value="Methylthiotransferase_N_sf"/>
</dbReference>
<dbReference type="InterPro" id="IPR012340">
    <property type="entry name" value="NA-bd_OB-fold"/>
</dbReference>
<dbReference type="InterPro" id="IPR005840">
    <property type="entry name" value="Ribosomal_uS12_MeSTrfase_RimO"/>
</dbReference>
<dbReference type="InterPro" id="IPR007197">
    <property type="entry name" value="rSAM"/>
</dbReference>
<dbReference type="InterPro" id="IPR023404">
    <property type="entry name" value="rSAM_horseshoe"/>
</dbReference>
<dbReference type="InterPro" id="IPR002792">
    <property type="entry name" value="TRAM_dom"/>
</dbReference>
<dbReference type="NCBIfam" id="TIGR01125">
    <property type="entry name" value="30S ribosomal protein S12 methylthiotransferase RimO"/>
    <property type="match status" value="1"/>
</dbReference>
<dbReference type="PANTHER" id="PTHR43837">
    <property type="entry name" value="RIBOSOMAL PROTEIN S12 METHYLTHIOTRANSFERASE RIMO"/>
    <property type="match status" value="1"/>
</dbReference>
<dbReference type="PANTHER" id="PTHR43837:SF1">
    <property type="entry name" value="RIBOSOMAL PROTEIN US12 METHYLTHIOTRANSFERASE RIMO"/>
    <property type="match status" value="1"/>
</dbReference>
<dbReference type="Pfam" id="PF04055">
    <property type="entry name" value="Radical_SAM"/>
    <property type="match status" value="1"/>
</dbReference>
<dbReference type="Pfam" id="PF18693">
    <property type="entry name" value="TRAM_2"/>
    <property type="match status" value="1"/>
</dbReference>
<dbReference type="Pfam" id="PF00919">
    <property type="entry name" value="UPF0004"/>
    <property type="match status" value="1"/>
</dbReference>
<dbReference type="SFLD" id="SFLDG01082">
    <property type="entry name" value="B12-binding_domain_containing"/>
    <property type="match status" value="1"/>
</dbReference>
<dbReference type="SFLD" id="SFLDS00029">
    <property type="entry name" value="Radical_SAM"/>
    <property type="match status" value="1"/>
</dbReference>
<dbReference type="SFLD" id="SFLDF00274">
    <property type="entry name" value="ribosomal_protein_S12_methylth"/>
    <property type="match status" value="1"/>
</dbReference>
<dbReference type="SMART" id="SM00729">
    <property type="entry name" value="Elp3"/>
    <property type="match status" value="1"/>
</dbReference>
<dbReference type="SUPFAM" id="SSF102114">
    <property type="entry name" value="Radical SAM enzymes"/>
    <property type="match status" value="1"/>
</dbReference>
<dbReference type="PROSITE" id="PS51449">
    <property type="entry name" value="MTTASE_N"/>
    <property type="match status" value="1"/>
</dbReference>
<dbReference type="PROSITE" id="PS01278">
    <property type="entry name" value="MTTASE_RADICAL"/>
    <property type="match status" value="1"/>
</dbReference>
<dbReference type="PROSITE" id="PS51918">
    <property type="entry name" value="RADICAL_SAM"/>
    <property type="match status" value="1"/>
</dbReference>
<proteinExistence type="inferred from homology"/>
<reference key="1">
    <citation type="journal article" date="2007" name="Proc. Natl. Acad. Sci. U.S.A.">
        <title>Genome sequencing reveals complex secondary metabolome in the marine actinomycete Salinispora tropica.</title>
        <authorList>
            <person name="Udwary D.W."/>
            <person name="Zeigler L."/>
            <person name="Asolkar R.N."/>
            <person name="Singan V."/>
            <person name="Lapidus A."/>
            <person name="Fenical W."/>
            <person name="Jensen P.R."/>
            <person name="Moore B.S."/>
        </authorList>
    </citation>
    <scope>NUCLEOTIDE SEQUENCE [LARGE SCALE GENOMIC DNA]</scope>
    <source>
        <strain>ATCC BAA-916 / DSM 44818 / JCM 13857 / NBRC 105044 / CNB-440</strain>
    </source>
</reference>
<accession>A4X4R3</accession>
<comment type="function">
    <text evidence="1">Catalyzes the methylthiolation of an aspartic acid residue of ribosomal protein uS12.</text>
</comment>
<comment type="catalytic activity">
    <reaction evidence="1">
        <text>L-aspartate(89)-[ribosomal protein uS12]-hydrogen + (sulfur carrier)-SH + AH2 + 2 S-adenosyl-L-methionine = 3-methylsulfanyl-L-aspartate(89)-[ribosomal protein uS12]-hydrogen + (sulfur carrier)-H + 5'-deoxyadenosine + L-methionine + A + S-adenosyl-L-homocysteine + 2 H(+)</text>
        <dbReference type="Rhea" id="RHEA:37087"/>
        <dbReference type="Rhea" id="RHEA-COMP:10460"/>
        <dbReference type="Rhea" id="RHEA-COMP:10461"/>
        <dbReference type="Rhea" id="RHEA-COMP:14737"/>
        <dbReference type="Rhea" id="RHEA-COMP:14739"/>
        <dbReference type="ChEBI" id="CHEBI:13193"/>
        <dbReference type="ChEBI" id="CHEBI:15378"/>
        <dbReference type="ChEBI" id="CHEBI:17319"/>
        <dbReference type="ChEBI" id="CHEBI:17499"/>
        <dbReference type="ChEBI" id="CHEBI:29917"/>
        <dbReference type="ChEBI" id="CHEBI:29961"/>
        <dbReference type="ChEBI" id="CHEBI:57844"/>
        <dbReference type="ChEBI" id="CHEBI:57856"/>
        <dbReference type="ChEBI" id="CHEBI:59789"/>
        <dbReference type="ChEBI" id="CHEBI:64428"/>
        <dbReference type="ChEBI" id="CHEBI:73599"/>
        <dbReference type="EC" id="2.8.4.4"/>
    </reaction>
</comment>
<comment type="cofactor">
    <cofactor evidence="1">
        <name>[4Fe-4S] cluster</name>
        <dbReference type="ChEBI" id="CHEBI:49883"/>
    </cofactor>
    <text evidence="1">Binds 2 [4Fe-4S] clusters. One cluster is coordinated with 3 cysteines and an exchangeable S-adenosyl-L-methionine.</text>
</comment>
<comment type="subcellular location">
    <subcellularLocation>
        <location evidence="1">Cytoplasm</location>
    </subcellularLocation>
</comment>
<comment type="similarity">
    <text evidence="1">Belongs to the methylthiotransferase family. RimO subfamily.</text>
</comment>
<sequence>MVSATPPAPADGRRVALLTLGCARNEVDSEELAARLHSDGWQVTTDGEGADVVVVNTCGFVEKAKQDSIQTLLAAAETGAKVVAAGCMAERYGRELAESLPEAQAVLSFDDYPDISDRLGAVLAGTAIDAHTPRDRRELLPLTPVRRGEAAVSLPGHGTPAAVAQPGARSAPIEVDEHTPAHLRPVLRRRLDTGPVASLKLASGCDRRCAFCAIPAFRGAFVSRPPEALLAEAEWLARTGVRELVLVSENSSSYGKDLGDPRALEKLLPQLAAVDGIVRVRASYLQPAETRPGLVEAIATTPGVAPYFDLSFQHSSEAVLRRMRRFGSTDRFLELLGSIRALSPEAGARSNFIVGFPGETRADVAELVRFLEEARLDAIGVFDYSDEDGTEAAGLSGKVTTATVKRRYDRLSALADELCAQRAEQRLGSTVQVLVDSVDGGVVEGRAAHQAPEVDGSTTLVAPVGGGVDLTALRPGDLVECTVTATEGVDLVAVPDAMISAAPGVAR</sequence>
<keyword id="KW-0004">4Fe-4S</keyword>
<keyword id="KW-0963">Cytoplasm</keyword>
<keyword id="KW-0408">Iron</keyword>
<keyword id="KW-0411">Iron-sulfur</keyword>
<keyword id="KW-0479">Metal-binding</keyword>
<keyword id="KW-1185">Reference proteome</keyword>
<keyword id="KW-0949">S-adenosyl-L-methionine</keyword>
<keyword id="KW-0808">Transferase</keyword>